<reference key="1">
    <citation type="journal article" date="2011" name="Mol. Pharmacol.">
        <title>A novel family of insect-selective peptide neurotoxins targeting insect large-conductance calcium-activated K+ channels isolated from the venom of the theraphosid spider Eucratoscelus constrictus.</title>
        <authorList>
            <person name="Windley M.J."/>
            <person name="Escoubas P."/>
            <person name="Valenzuela S.M."/>
            <person name="Nicholson G.M."/>
        </authorList>
    </citation>
    <scope>PROTEIN SEQUENCE</scope>
    <scope>FUNCTION</scope>
    <scope>SUBCELLULAR LOCATION</scope>
    <scope>MASS SPECTROMETRY</scope>
    <scope>TOXIC DOSE</scope>
    <source>
        <tissue>Venom</tissue>
    </source>
</reference>
<feature type="peptide" id="PRO_0000451987" description="Lambda-theraphotoxin-Ec2b">
    <location>
        <begin position="1"/>
        <end position="29"/>
    </location>
</feature>
<feature type="disulfide bond" evidence="1">
    <location>
        <begin position="2"/>
        <end position="16"/>
    </location>
</feature>
<feature type="disulfide bond" evidence="1">
    <location>
        <begin position="9"/>
        <end position="21"/>
    </location>
</feature>
<feature type="disulfide bond" evidence="1">
    <location>
        <begin position="15"/>
        <end position="25"/>
    </location>
</feature>
<comment type="function">
    <text evidence="2 5">Insect-selective neurotoxin that potently blocks insect calcium-activated potassium (BKCa) channels (Slo-type) in cockroach dorsal unpaired median (DUM) neurons (IC(50)=25.3 nM) (PubMed:21447641). This occurs in the absence of any shifts in the voltage dependence of activation (PubMed:21447641). May interact with the turret and/or loop region of the external entrance to the channel and does not project deeply into the pore of the channel (Probable). In vivo, does not show toxicity in mice after intracerebroventricular injection of up to 25 pmol/g (1.8 ug/20 g mouse) (PubMed:21447641).</text>
</comment>
<comment type="subcellular location">
    <subcellularLocation>
        <location evidence="2">Secreted</location>
    </subcellularLocation>
</comment>
<comment type="tissue specificity">
    <text evidence="5">Expressed by the venom gland.</text>
</comment>
<comment type="domain">
    <text evidence="1">The presence of a 'disulfide through disulfide knot' structurally defines this protein as a knottin.</text>
</comment>
<comment type="mass spectrometry">
    <text>Monoisotopic mass.</text>
</comment>
<comment type="toxic dose">
    <text evidence="2">Intrathoracical injection into juvenile crickets (Gryllus bimaculatus) of this toxin (at a dose of ca. 1100 pmol/g (4 ug/g)) causes a rapid insecticidal activity, with complete paralysis within 5 minutes and death within 15 minutes.</text>
</comment>
<comment type="miscellaneous">
    <text evidence="2">Negative results: At concentrations up to 330 nM, does not show activity on transient 'A-type' Kv, delayed-rectifier Kv, voltage-gated sodium channel (Nav) and both HVA and M-LVA Cav channels in cockroach DUM neurons.</text>
</comment>
<comment type="similarity">
    <text evidence="4">Belongs to the neurotoxin 30 (phrixotoxin) family.</text>
</comment>
<comment type="caution">
    <text evidence="4">This toxin has the prefix lambda in its name (instead of kappa), since lambda is the Greek letter attributed to calcium-activated potassium (KCa) channel impairing toxins (according to the nomenclature of King et al., 2008).</text>
</comment>
<evidence type="ECO:0000250" key="1">
    <source>
        <dbReference type="UniProtKB" id="P83476"/>
    </source>
</evidence>
<evidence type="ECO:0000269" key="2">
    <source>
    </source>
</evidence>
<evidence type="ECO:0000303" key="3">
    <source>
    </source>
</evidence>
<evidence type="ECO:0000305" key="4"/>
<evidence type="ECO:0000305" key="5">
    <source>
    </source>
</evidence>
<sequence>YCQKFLWTCDTERKCCEDMVCELWCKYKE</sequence>
<accession>P0DQO6</accession>
<dbReference type="SMR" id="P0DQO6"/>
<dbReference type="GO" id="GO:0005576">
    <property type="term" value="C:extracellular region"/>
    <property type="evidence" value="ECO:0007669"/>
    <property type="project" value="UniProtKB-SubCell"/>
</dbReference>
<dbReference type="GO" id="GO:0008200">
    <property type="term" value="F:ion channel inhibitor activity"/>
    <property type="evidence" value="ECO:0007669"/>
    <property type="project" value="InterPro"/>
</dbReference>
<dbReference type="GO" id="GO:0015459">
    <property type="term" value="F:potassium channel regulator activity"/>
    <property type="evidence" value="ECO:0007669"/>
    <property type="project" value="UniProtKB-KW"/>
</dbReference>
<dbReference type="GO" id="GO:0090729">
    <property type="term" value="F:toxin activity"/>
    <property type="evidence" value="ECO:0007669"/>
    <property type="project" value="UniProtKB-KW"/>
</dbReference>
<dbReference type="InterPro" id="IPR011696">
    <property type="entry name" value="Huwentoxin-1"/>
</dbReference>
<dbReference type="Pfam" id="PF07740">
    <property type="entry name" value="Toxin_12"/>
    <property type="match status" value="1"/>
</dbReference>
<dbReference type="SUPFAM" id="SSF57059">
    <property type="entry name" value="omega toxin-like"/>
    <property type="match status" value="1"/>
</dbReference>
<keyword id="KW-1221">Calcium-activated potassium channel impairing toxin</keyword>
<keyword id="KW-0903">Direct protein sequencing</keyword>
<keyword id="KW-1015">Disulfide bond</keyword>
<keyword id="KW-0872">Ion channel impairing toxin</keyword>
<keyword id="KW-0528">Neurotoxin</keyword>
<keyword id="KW-0632">Potassium channel impairing toxin</keyword>
<keyword id="KW-0964">Secreted</keyword>
<keyword id="KW-0800">Toxin</keyword>
<proteinExistence type="evidence at protein level"/>
<organism>
    <name type="scientific">Eucratoscelus constrictus</name>
    <name type="common">African red-rump baboon spider</name>
    <dbReference type="NCBI Taxonomy" id="2771863"/>
    <lineage>
        <taxon>Eukaryota</taxon>
        <taxon>Metazoa</taxon>
        <taxon>Ecdysozoa</taxon>
        <taxon>Arthropoda</taxon>
        <taxon>Chelicerata</taxon>
        <taxon>Arachnida</taxon>
        <taxon>Araneae</taxon>
        <taxon>Mygalomorphae</taxon>
        <taxon>Theraphosidae</taxon>
        <taxon>Eucratoscelus</taxon>
    </lineage>
</organism>
<protein>
    <recommendedName>
        <fullName evidence="4">Lambda-theraphotoxin-Ec2b</fullName>
        <shortName evidence="4">Lambda-TRTX-Ec2b</shortName>
    </recommendedName>
    <alternativeName>
        <fullName evidence="3">Kappa-theraphotoxin-Ec2b</fullName>
        <shortName evidence="3">Kappa-TRTX-Ec2b</shortName>
    </alternativeName>
</protein>
<name>TX2B_EUCCO</name>